<keyword id="KW-1185">Reference proteome</keyword>
<keyword id="KW-0687">Ribonucleoprotein</keyword>
<keyword id="KW-0689">Ribosomal protein</keyword>
<keyword id="KW-0694">RNA-binding</keyword>
<keyword id="KW-0699">rRNA-binding</keyword>
<feature type="chain" id="PRO_0000243691" description="Large ribosomal subunit protein bL20">
    <location>
        <begin position="1"/>
        <end position="118"/>
    </location>
</feature>
<name>RL20_LACAC</name>
<protein>
    <recommendedName>
        <fullName evidence="1">Large ribosomal subunit protein bL20</fullName>
    </recommendedName>
    <alternativeName>
        <fullName evidence="2">50S ribosomal protein L20</fullName>
    </alternativeName>
</protein>
<proteinExistence type="inferred from homology"/>
<organism>
    <name type="scientific">Lactobacillus acidophilus (strain ATCC 700396 / NCK56 / N2 / NCFM)</name>
    <dbReference type="NCBI Taxonomy" id="272621"/>
    <lineage>
        <taxon>Bacteria</taxon>
        <taxon>Bacillati</taxon>
        <taxon>Bacillota</taxon>
        <taxon>Bacilli</taxon>
        <taxon>Lactobacillales</taxon>
        <taxon>Lactobacillaceae</taxon>
        <taxon>Lactobacillus</taxon>
    </lineage>
</organism>
<sequence>MPRVKGGTVTRQRRKKIMKLAKGYRGAKHMQFKAASTQLFVSYKYAFRDRRRRKSDFRKLWIARINAAARQNDISYSKLMHGLKLAGVDMNRKMLADIAYNDSKTFAQLADTAKKALN</sequence>
<reference key="1">
    <citation type="journal article" date="2005" name="Proc. Natl. Acad. Sci. U.S.A.">
        <title>Complete genome sequence of the probiotic lactic acid bacterium Lactobacillus acidophilus NCFM.</title>
        <authorList>
            <person name="Altermann E."/>
            <person name="Russell W.M."/>
            <person name="Azcarate-Peril M.A."/>
            <person name="Barrangou R."/>
            <person name="Buck B.L."/>
            <person name="McAuliffe O."/>
            <person name="Souther N."/>
            <person name="Dobson A."/>
            <person name="Duong T."/>
            <person name="Callanan M."/>
            <person name="Lick S."/>
            <person name="Hamrick A."/>
            <person name="Cano R."/>
            <person name="Klaenhammer T.R."/>
        </authorList>
    </citation>
    <scope>NUCLEOTIDE SEQUENCE [LARGE SCALE GENOMIC DNA]</scope>
    <source>
        <strain>ATCC 700396 / NCK56 / N2 / NCFM</strain>
    </source>
</reference>
<accession>Q5FIW9</accession>
<dbReference type="EMBL" id="CP000033">
    <property type="protein sequence ID" value="AAV43355.1"/>
    <property type="molecule type" value="Genomic_DNA"/>
</dbReference>
<dbReference type="RefSeq" id="WP_003548326.1">
    <property type="nucleotide sequence ID" value="NC_006814.3"/>
</dbReference>
<dbReference type="RefSeq" id="YP_194386.1">
    <property type="nucleotide sequence ID" value="NC_006814.3"/>
</dbReference>
<dbReference type="SMR" id="Q5FIW9"/>
<dbReference type="STRING" id="272621.LBA1536"/>
<dbReference type="GeneID" id="93289396"/>
<dbReference type="KEGG" id="lac:LBA1536"/>
<dbReference type="PATRIC" id="fig|272621.13.peg.1460"/>
<dbReference type="eggNOG" id="COG0292">
    <property type="taxonomic scope" value="Bacteria"/>
</dbReference>
<dbReference type="HOGENOM" id="CLU_123265_0_1_9"/>
<dbReference type="OrthoDB" id="9808966at2"/>
<dbReference type="BioCyc" id="LACI272621:G1G49-1503-MONOMER"/>
<dbReference type="Proteomes" id="UP000006381">
    <property type="component" value="Chromosome"/>
</dbReference>
<dbReference type="GO" id="GO:1990904">
    <property type="term" value="C:ribonucleoprotein complex"/>
    <property type="evidence" value="ECO:0007669"/>
    <property type="project" value="UniProtKB-KW"/>
</dbReference>
<dbReference type="GO" id="GO:0005840">
    <property type="term" value="C:ribosome"/>
    <property type="evidence" value="ECO:0007669"/>
    <property type="project" value="UniProtKB-KW"/>
</dbReference>
<dbReference type="GO" id="GO:0019843">
    <property type="term" value="F:rRNA binding"/>
    <property type="evidence" value="ECO:0007669"/>
    <property type="project" value="UniProtKB-UniRule"/>
</dbReference>
<dbReference type="GO" id="GO:0003735">
    <property type="term" value="F:structural constituent of ribosome"/>
    <property type="evidence" value="ECO:0007669"/>
    <property type="project" value="InterPro"/>
</dbReference>
<dbReference type="GO" id="GO:0000027">
    <property type="term" value="P:ribosomal large subunit assembly"/>
    <property type="evidence" value="ECO:0007669"/>
    <property type="project" value="UniProtKB-UniRule"/>
</dbReference>
<dbReference type="GO" id="GO:0006412">
    <property type="term" value="P:translation"/>
    <property type="evidence" value="ECO:0007669"/>
    <property type="project" value="InterPro"/>
</dbReference>
<dbReference type="CDD" id="cd07026">
    <property type="entry name" value="Ribosomal_L20"/>
    <property type="match status" value="1"/>
</dbReference>
<dbReference type="FunFam" id="1.10.1900.20:FF:000001">
    <property type="entry name" value="50S ribosomal protein L20"/>
    <property type="match status" value="1"/>
</dbReference>
<dbReference type="Gene3D" id="6.10.160.10">
    <property type="match status" value="1"/>
</dbReference>
<dbReference type="Gene3D" id="1.10.1900.20">
    <property type="entry name" value="Ribosomal protein L20"/>
    <property type="match status" value="1"/>
</dbReference>
<dbReference type="HAMAP" id="MF_00382">
    <property type="entry name" value="Ribosomal_bL20"/>
    <property type="match status" value="1"/>
</dbReference>
<dbReference type="InterPro" id="IPR005813">
    <property type="entry name" value="Ribosomal_bL20"/>
</dbReference>
<dbReference type="InterPro" id="IPR049946">
    <property type="entry name" value="RIBOSOMAL_L20_CS"/>
</dbReference>
<dbReference type="InterPro" id="IPR035566">
    <property type="entry name" value="Ribosomal_protein_bL20_C"/>
</dbReference>
<dbReference type="NCBIfam" id="TIGR01032">
    <property type="entry name" value="rplT_bact"/>
    <property type="match status" value="1"/>
</dbReference>
<dbReference type="PANTHER" id="PTHR10986">
    <property type="entry name" value="39S RIBOSOMAL PROTEIN L20"/>
    <property type="match status" value="1"/>
</dbReference>
<dbReference type="Pfam" id="PF00453">
    <property type="entry name" value="Ribosomal_L20"/>
    <property type="match status" value="1"/>
</dbReference>
<dbReference type="PRINTS" id="PR00062">
    <property type="entry name" value="RIBOSOMALL20"/>
</dbReference>
<dbReference type="SUPFAM" id="SSF74731">
    <property type="entry name" value="Ribosomal protein L20"/>
    <property type="match status" value="1"/>
</dbReference>
<dbReference type="PROSITE" id="PS00937">
    <property type="entry name" value="RIBOSOMAL_L20"/>
    <property type="match status" value="1"/>
</dbReference>
<gene>
    <name evidence="1" type="primary">rplT</name>
    <name type="ordered locus">LBA1536</name>
</gene>
<evidence type="ECO:0000255" key="1">
    <source>
        <dbReference type="HAMAP-Rule" id="MF_00382"/>
    </source>
</evidence>
<evidence type="ECO:0000305" key="2"/>
<comment type="function">
    <text evidence="1">Binds directly to 23S ribosomal RNA and is necessary for the in vitro assembly process of the 50S ribosomal subunit. It is not involved in the protein synthesizing functions of that subunit.</text>
</comment>
<comment type="similarity">
    <text evidence="1">Belongs to the bacterial ribosomal protein bL20 family.</text>
</comment>